<dbReference type="EC" id="2.7.1.148" evidence="1"/>
<dbReference type="EMBL" id="CP000305">
    <property type="protein sequence ID" value="ABG17826.1"/>
    <property type="molecule type" value="Genomic_DNA"/>
</dbReference>
<dbReference type="EMBL" id="ACNQ01000009">
    <property type="protein sequence ID" value="EEO76928.1"/>
    <property type="molecule type" value="Genomic_DNA"/>
</dbReference>
<dbReference type="RefSeq" id="WP_002211239.1">
    <property type="nucleotide sequence ID" value="NZ_ACNQ01000009.1"/>
</dbReference>
<dbReference type="SMR" id="Q1CJK4"/>
<dbReference type="GeneID" id="57976647"/>
<dbReference type="KEGG" id="ypn:YPN_1496"/>
<dbReference type="HOGENOM" id="CLU_053057_3_0_6"/>
<dbReference type="UniPathway" id="UPA00056">
    <property type="reaction ID" value="UER00094"/>
</dbReference>
<dbReference type="Proteomes" id="UP000008936">
    <property type="component" value="Chromosome"/>
</dbReference>
<dbReference type="GO" id="GO:0050515">
    <property type="term" value="F:4-(cytidine 5'-diphospho)-2-C-methyl-D-erythritol kinase activity"/>
    <property type="evidence" value="ECO:0007669"/>
    <property type="project" value="UniProtKB-UniRule"/>
</dbReference>
<dbReference type="GO" id="GO:0005524">
    <property type="term" value="F:ATP binding"/>
    <property type="evidence" value="ECO:0007669"/>
    <property type="project" value="UniProtKB-UniRule"/>
</dbReference>
<dbReference type="GO" id="GO:0019288">
    <property type="term" value="P:isopentenyl diphosphate biosynthetic process, methylerythritol 4-phosphate pathway"/>
    <property type="evidence" value="ECO:0007669"/>
    <property type="project" value="UniProtKB-UniRule"/>
</dbReference>
<dbReference type="GO" id="GO:0016114">
    <property type="term" value="P:terpenoid biosynthetic process"/>
    <property type="evidence" value="ECO:0007669"/>
    <property type="project" value="InterPro"/>
</dbReference>
<dbReference type="FunFam" id="3.30.230.10:FF:000022">
    <property type="entry name" value="4-diphosphocytidyl-2-C-methyl-D-erythritol kinase"/>
    <property type="match status" value="1"/>
</dbReference>
<dbReference type="FunFam" id="3.30.70.890:FF:000004">
    <property type="entry name" value="4-diphosphocytidyl-2-C-methyl-D-erythritol kinase"/>
    <property type="match status" value="1"/>
</dbReference>
<dbReference type="Gene3D" id="3.30.230.10">
    <property type="match status" value="1"/>
</dbReference>
<dbReference type="Gene3D" id="3.30.70.890">
    <property type="entry name" value="GHMP kinase, C-terminal domain"/>
    <property type="match status" value="1"/>
</dbReference>
<dbReference type="HAMAP" id="MF_00061">
    <property type="entry name" value="IspE"/>
    <property type="match status" value="1"/>
</dbReference>
<dbReference type="InterPro" id="IPR013750">
    <property type="entry name" value="GHMP_kinase_C_dom"/>
</dbReference>
<dbReference type="InterPro" id="IPR036554">
    <property type="entry name" value="GHMP_kinase_C_sf"/>
</dbReference>
<dbReference type="InterPro" id="IPR006204">
    <property type="entry name" value="GHMP_kinase_N_dom"/>
</dbReference>
<dbReference type="InterPro" id="IPR004424">
    <property type="entry name" value="IspE"/>
</dbReference>
<dbReference type="InterPro" id="IPR020568">
    <property type="entry name" value="Ribosomal_Su5_D2-typ_SF"/>
</dbReference>
<dbReference type="InterPro" id="IPR014721">
    <property type="entry name" value="Ribsml_uS5_D2-typ_fold_subgr"/>
</dbReference>
<dbReference type="NCBIfam" id="TIGR00154">
    <property type="entry name" value="ispE"/>
    <property type="match status" value="1"/>
</dbReference>
<dbReference type="PANTHER" id="PTHR43527">
    <property type="entry name" value="4-DIPHOSPHOCYTIDYL-2-C-METHYL-D-ERYTHRITOL KINASE, CHLOROPLASTIC"/>
    <property type="match status" value="1"/>
</dbReference>
<dbReference type="PANTHER" id="PTHR43527:SF2">
    <property type="entry name" value="4-DIPHOSPHOCYTIDYL-2-C-METHYL-D-ERYTHRITOL KINASE, CHLOROPLASTIC"/>
    <property type="match status" value="1"/>
</dbReference>
<dbReference type="Pfam" id="PF08544">
    <property type="entry name" value="GHMP_kinases_C"/>
    <property type="match status" value="1"/>
</dbReference>
<dbReference type="Pfam" id="PF00288">
    <property type="entry name" value="GHMP_kinases_N"/>
    <property type="match status" value="1"/>
</dbReference>
<dbReference type="PIRSF" id="PIRSF010376">
    <property type="entry name" value="IspE"/>
    <property type="match status" value="1"/>
</dbReference>
<dbReference type="SUPFAM" id="SSF55060">
    <property type="entry name" value="GHMP Kinase, C-terminal domain"/>
    <property type="match status" value="1"/>
</dbReference>
<dbReference type="SUPFAM" id="SSF54211">
    <property type="entry name" value="Ribosomal protein S5 domain 2-like"/>
    <property type="match status" value="1"/>
</dbReference>
<comment type="function">
    <text evidence="1">Catalyzes the phosphorylation of the position 2 hydroxy group of 4-diphosphocytidyl-2C-methyl-D-erythritol.</text>
</comment>
<comment type="catalytic activity">
    <reaction evidence="1">
        <text>4-CDP-2-C-methyl-D-erythritol + ATP = 4-CDP-2-C-methyl-D-erythritol 2-phosphate + ADP + H(+)</text>
        <dbReference type="Rhea" id="RHEA:18437"/>
        <dbReference type="ChEBI" id="CHEBI:15378"/>
        <dbReference type="ChEBI" id="CHEBI:30616"/>
        <dbReference type="ChEBI" id="CHEBI:57823"/>
        <dbReference type="ChEBI" id="CHEBI:57919"/>
        <dbReference type="ChEBI" id="CHEBI:456216"/>
        <dbReference type="EC" id="2.7.1.148"/>
    </reaction>
</comment>
<comment type="pathway">
    <text evidence="1">Isoprenoid biosynthesis; isopentenyl diphosphate biosynthesis via DXP pathway; isopentenyl diphosphate from 1-deoxy-D-xylulose 5-phosphate: step 3/6.</text>
</comment>
<comment type="subunit">
    <text evidence="1">Homodimer.</text>
</comment>
<comment type="similarity">
    <text evidence="1">Belongs to the GHMP kinase family. IspE subfamily.</text>
</comment>
<name>ISPE_YERPN</name>
<accession>Q1CJK4</accession>
<accession>C4GSB8</accession>
<reference key="1">
    <citation type="journal article" date="2006" name="J. Bacteriol.">
        <title>Complete genome sequence of Yersinia pestis strains Antiqua and Nepal516: evidence of gene reduction in an emerging pathogen.</title>
        <authorList>
            <person name="Chain P.S.G."/>
            <person name="Hu P."/>
            <person name="Malfatti S.A."/>
            <person name="Radnedge L."/>
            <person name="Larimer F."/>
            <person name="Vergez L.M."/>
            <person name="Worsham P."/>
            <person name="Chu M.C."/>
            <person name="Andersen G.L."/>
        </authorList>
    </citation>
    <scope>NUCLEOTIDE SEQUENCE [LARGE SCALE GENOMIC DNA]</scope>
    <source>
        <strain>Nepal516</strain>
    </source>
</reference>
<reference key="2">
    <citation type="submission" date="2009-04" db="EMBL/GenBank/DDBJ databases">
        <title>Yersinia pestis Nepal516A whole genome shotgun sequencing project.</title>
        <authorList>
            <person name="Plunkett G. III"/>
            <person name="Anderson B.D."/>
            <person name="Baumler D.J."/>
            <person name="Burland V."/>
            <person name="Cabot E.L."/>
            <person name="Glasner J.D."/>
            <person name="Mau B."/>
            <person name="Neeno-Eckwall E."/>
            <person name="Perna N.T."/>
            <person name="Munk A.C."/>
            <person name="Tapia R."/>
            <person name="Green L.D."/>
            <person name="Rogers Y.C."/>
            <person name="Detter J.C."/>
            <person name="Bruce D.C."/>
            <person name="Brettin T.S."/>
        </authorList>
    </citation>
    <scope>NUCLEOTIDE SEQUENCE [LARGE SCALE GENOMIC DNA]</scope>
    <source>
        <strain>Nepal516</strain>
    </source>
</reference>
<sequence length="299" mass="32675">MTTANQPICPSPAKWPSPAKLNLFLYITGQRADGYHQLQTLFQFLDYGDQLTIEPRDDNQIRLLTPIAGVENEQNLIVRAAKMLQKHPGNTPVPRGADISIDKCLPMGGGLGGGSSNAATVLVALNLLWQCGLTDEQLADLGLTLGADVPVFVRGHAAFAEGIGEKLQPAEPVEKWYLVIHPGVNIPTPIIFSDPELKRNTPIRPLAALLSTPYANDCEPIARKRFREVEQALSWLLEYAPSRLTGTGACVFAEFDTESSARQVLSIAPEWLHGFVARGVNVSPLHRVRSGKIESSERR</sequence>
<organism>
    <name type="scientific">Yersinia pestis bv. Antiqua (strain Nepal516)</name>
    <dbReference type="NCBI Taxonomy" id="377628"/>
    <lineage>
        <taxon>Bacteria</taxon>
        <taxon>Pseudomonadati</taxon>
        <taxon>Pseudomonadota</taxon>
        <taxon>Gammaproteobacteria</taxon>
        <taxon>Enterobacterales</taxon>
        <taxon>Yersiniaceae</taxon>
        <taxon>Yersinia</taxon>
    </lineage>
</organism>
<protein>
    <recommendedName>
        <fullName evidence="1">4-diphosphocytidyl-2-C-methyl-D-erythritol kinase</fullName>
        <shortName evidence="1">CMK</shortName>
        <ecNumber evidence="1">2.7.1.148</ecNumber>
    </recommendedName>
    <alternativeName>
        <fullName evidence="1">4-(cytidine-5'-diphospho)-2-C-methyl-D-erythritol kinase</fullName>
    </alternativeName>
</protein>
<keyword id="KW-0067">ATP-binding</keyword>
<keyword id="KW-0414">Isoprene biosynthesis</keyword>
<keyword id="KW-0418">Kinase</keyword>
<keyword id="KW-0547">Nucleotide-binding</keyword>
<keyword id="KW-0808">Transferase</keyword>
<gene>
    <name evidence="1" type="primary">ispE</name>
    <name type="ordered locus">YPN_1496</name>
    <name type="ORF">YP516_1656</name>
</gene>
<feature type="chain" id="PRO_1000007904" description="4-diphosphocytidyl-2-C-methyl-D-erythritol kinase">
    <location>
        <begin position="1"/>
        <end position="299"/>
    </location>
</feature>
<feature type="active site" evidence="1">
    <location>
        <position position="20"/>
    </location>
</feature>
<feature type="active site" evidence="1">
    <location>
        <position position="148"/>
    </location>
</feature>
<feature type="binding site" evidence="1">
    <location>
        <begin position="106"/>
        <end position="116"/>
    </location>
    <ligand>
        <name>ATP</name>
        <dbReference type="ChEBI" id="CHEBI:30616"/>
    </ligand>
</feature>
<evidence type="ECO:0000255" key="1">
    <source>
        <dbReference type="HAMAP-Rule" id="MF_00061"/>
    </source>
</evidence>
<proteinExistence type="inferred from homology"/>